<reference key="1">
    <citation type="journal article" date="1999" name="AIDS Res. Hum. Retroviruses">
        <title>Virtually full-length sequences of HIV type 1 subtype J reference strains.</title>
        <authorList>
            <person name="Laukkanen T."/>
            <person name="Albert J."/>
            <person name="Liitsola K."/>
            <person name="Green S.D."/>
            <person name="Carr J.K."/>
            <person name="Leitner T."/>
            <person name="McCutchan F.E."/>
            <person name="Salminen M.O."/>
        </authorList>
    </citation>
    <scope>NUCLEOTIDE SEQUENCE [GENOMIC RNA]</scope>
</reference>
<proteinExistence type="inferred from homology"/>
<accession>Q9WC55</accession>
<name>VIF_HV1S2</name>
<gene>
    <name evidence="2" type="primary">vif</name>
</gene>
<dbReference type="EMBL" id="AF082394">
    <property type="protein sequence ID" value="AAD17758.1"/>
    <property type="molecule type" value="Genomic_DNA"/>
</dbReference>
<dbReference type="SMR" id="Q9WC55"/>
<dbReference type="Proteomes" id="UP000135310">
    <property type="component" value="Segment"/>
</dbReference>
<dbReference type="GO" id="GO:0030430">
    <property type="term" value="C:host cell cytoplasm"/>
    <property type="evidence" value="ECO:0007669"/>
    <property type="project" value="UniProtKB-SubCell"/>
</dbReference>
<dbReference type="GO" id="GO:0020002">
    <property type="term" value="C:host cell plasma membrane"/>
    <property type="evidence" value="ECO:0007669"/>
    <property type="project" value="UniProtKB-SubCell"/>
</dbReference>
<dbReference type="GO" id="GO:0016020">
    <property type="term" value="C:membrane"/>
    <property type="evidence" value="ECO:0007669"/>
    <property type="project" value="UniProtKB-UniRule"/>
</dbReference>
<dbReference type="GO" id="GO:0044423">
    <property type="term" value="C:virion component"/>
    <property type="evidence" value="ECO:0007669"/>
    <property type="project" value="UniProtKB-UniRule"/>
</dbReference>
<dbReference type="GO" id="GO:0046872">
    <property type="term" value="F:metal ion binding"/>
    <property type="evidence" value="ECO:0007669"/>
    <property type="project" value="UniProtKB-KW"/>
</dbReference>
<dbReference type="GO" id="GO:0003723">
    <property type="term" value="F:RNA binding"/>
    <property type="evidence" value="ECO:0007669"/>
    <property type="project" value="UniProtKB-UniRule"/>
</dbReference>
<dbReference type="GO" id="GO:0019058">
    <property type="term" value="P:viral life cycle"/>
    <property type="evidence" value="ECO:0007669"/>
    <property type="project" value="InterPro"/>
</dbReference>
<dbReference type="HAMAP" id="MF_04081">
    <property type="entry name" value="HIV_VIF"/>
    <property type="match status" value="1"/>
</dbReference>
<dbReference type="InterPro" id="IPR000475">
    <property type="entry name" value="Vif"/>
</dbReference>
<dbReference type="Pfam" id="PF00559">
    <property type="entry name" value="Vif"/>
    <property type="match status" value="1"/>
</dbReference>
<dbReference type="PRINTS" id="PR00349">
    <property type="entry name" value="VIRIONINFFCT"/>
</dbReference>
<protein>
    <recommendedName>
        <fullName evidence="2">Virion infectivity factor</fullName>
        <shortName evidence="2">Vif</shortName>
    </recommendedName>
    <alternativeName>
        <fullName evidence="2">SOR protein</fullName>
    </alternativeName>
    <component>
        <recommendedName>
            <fullName evidence="2">p17</fullName>
        </recommendedName>
    </component>
    <component>
        <recommendedName>
            <fullName evidence="2">p7</fullName>
        </recommendedName>
    </component>
</protein>
<evidence type="ECO:0000250" key="1">
    <source>
        <dbReference type="UniProtKB" id="O70897"/>
    </source>
</evidence>
<evidence type="ECO:0000255" key="2">
    <source>
        <dbReference type="HAMAP-Rule" id="MF_04081"/>
    </source>
</evidence>
<evidence type="ECO:0000256" key="3">
    <source>
        <dbReference type="SAM" id="MobiDB-lite"/>
    </source>
</evidence>
<sequence length="192" mass="22679">MENRWQVMIVWQVDRMRINTWKSLVKYHMNVSKKARKWLYRHHYDSNHPKISSEVHIPLGEAILVITTYWGLQTGERDWHLGQGVSIEWRQRRYRTQVDPGLADQLIHMCYFDCFSDSAIRKAILGQIVSPRCDYQAGHNKVGSLQYLALTALIRPKRRKPPLPSVQKLVEDRWNKPQKTTGHRESHTMNGH</sequence>
<organism>
    <name type="scientific">Human immunodeficiency virus type 1 group M subtype J (isolate SE9280)</name>
    <name type="common">HIV-1</name>
    <dbReference type="NCBI Taxonomy" id="388905"/>
    <lineage>
        <taxon>Viruses</taxon>
        <taxon>Riboviria</taxon>
        <taxon>Pararnavirae</taxon>
        <taxon>Artverviricota</taxon>
        <taxon>Revtraviricetes</taxon>
        <taxon>Ortervirales</taxon>
        <taxon>Retroviridae</taxon>
        <taxon>Orthoretrovirinae</taxon>
        <taxon>Lentivirus</taxon>
        <taxon>Human immunodeficiency virus type 1</taxon>
    </lineage>
</organism>
<keyword id="KW-0014">AIDS</keyword>
<keyword id="KW-1032">Host cell membrane</keyword>
<keyword id="KW-1035">Host cytoplasm</keyword>
<keyword id="KW-1043">Host membrane</keyword>
<keyword id="KW-0945">Host-virus interaction</keyword>
<keyword id="KW-0472">Membrane</keyword>
<keyword id="KW-0479">Metal-binding</keyword>
<keyword id="KW-0597">Phosphoprotein</keyword>
<keyword id="KW-0694">RNA-binding</keyword>
<keyword id="KW-0832">Ubl conjugation</keyword>
<keyword id="KW-0833">Ubl conjugation pathway</keyword>
<keyword id="KW-0946">Virion</keyword>
<keyword id="KW-0862">Zinc</keyword>
<feature type="chain" id="PRO_0000245141" description="Virion infectivity factor" evidence="2">
    <location>
        <begin position="1"/>
        <end position="192"/>
    </location>
</feature>
<feature type="chain" id="PRO_0000245142" description="p17" evidence="2">
    <location>
        <begin position="1"/>
        <end position="150"/>
    </location>
</feature>
<feature type="chain" id="PRO_0000245143" description="p7" evidence="2">
    <location>
        <begin position="151"/>
        <end position="192"/>
    </location>
</feature>
<feature type="region of interest" description="Interaction with host APOBEC3F; F1-box" evidence="2">
    <location>
        <begin position="14"/>
        <end position="17"/>
    </location>
</feature>
<feature type="region of interest" description="Interaction with host APOBEC3G; G-box" evidence="2">
    <location>
        <begin position="40"/>
        <end position="44"/>
    </location>
</feature>
<feature type="region of interest" description="Interaction with host APOBEC3F and APOBEC3G; FG-box" evidence="2">
    <location>
        <begin position="54"/>
        <end position="72"/>
    </location>
</feature>
<feature type="region of interest" description="Interaction with host APOBEC3F; F2-box" evidence="2">
    <location>
        <begin position="74"/>
        <end position="79"/>
    </location>
</feature>
<feature type="region of interest" description="RNA-binding" evidence="2">
    <location>
        <begin position="75"/>
        <end position="114"/>
    </location>
</feature>
<feature type="region of interest" description="SOCS box-like" evidence="2">
    <location>
        <begin position="151"/>
        <end position="180"/>
    </location>
</feature>
<feature type="region of interest" description="Multimerization" evidence="2">
    <location>
        <begin position="151"/>
        <end position="164"/>
    </location>
</feature>
<feature type="region of interest" description="Disordered" evidence="3">
    <location>
        <begin position="160"/>
        <end position="192"/>
    </location>
</feature>
<feature type="region of interest" description="Membrane association" evidence="2">
    <location>
        <begin position="171"/>
        <end position="172"/>
    </location>
</feature>
<feature type="short sequence motif" description="HCCH motif" evidence="2">
    <location>
        <begin position="108"/>
        <end position="139"/>
    </location>
</feature>
<feature type="short sequence motif" description="BC-box-like motif" evidence="2">
    <location>
        <begin position="144"/>
        <end position="153"/>
    </location>
</feature>
<feature type="compositionally biased region" description="Basic and acidic residues" evidence="3">
    <location>
        <begin position="182"/>
        <end position="192"/>
    </location>
</feature>
<feature type="binding site" evidence="2">
    <location>
        <position position="108"/>
    </location>
    <ligand>
        <name>Zn(2+)</name>
        <dbReference type="ChEBI" id="CHEBI:29105"/>
    </ligand>
</feature>
<feature type="binding site" evidence="2">
    <location>
        <position position="114"/>
    </location>
    <ligand>
        <name>Zn(2+)</name>
        <dbReference type="ChEBI" id="CHEBI:29105"/>
    </ligand>
</feature>
<feature type="binding site" evidence="2">
    <location>
        <position position="133"/>
    </location>
    <ligand>
        <name>Zn(2+)</name>
        <dbReference type="ChEBI" id="CHEBI:29105"/>
    </ligand>
</feature>
<feature type="binding site" evidence="2">
    <location>
        <position position="139"/>
    </location>
    <ligand>
        <name>Zn(2+)</name>
        <dbReference type="ChEBI" id="CHEBI:29105"/>
    </ligand>
</feature>
<feature type="site" description="Cleavage in virion (by viral protease)" evidence="2">
    <location>
        <begin position="150"/>
        <end position="151"/>
    </location>
</feature>
<feature type="modified residue" description="Phosphothreonine; by host MAP4K1" evidence="2">
    <location>
        <position position="96"/>
    </location>
</feature>
<feature type="modified residue" description="Phosphoserine; by host" evidence="2">
    <location>
        <position position="144"/>
    </location>
</feature>
<feature type="modified residue" description="Phosphoserine; by host MAP4K1" evidence="2">
    <location>
        <position position="165"/>
    </location>
</feature>
<feature type="modified residue" description="Phosphothreonine; by host" evidence="2">
    <location>
        <position position="188"/>
    </location>
</feature>
<organismHost>
    <name type="scientific">Homo sapiens</name>
    <name type="common">Human</name>
    <dbReference type="NCBI Taxonomy" id="9606"/>
</organismHost>
<comment type="function">
    <text evidence="2">Counteracts the innate antiviral activity of host APOBEC3F and APOBEC3G by promoting their ubiquitination and degradation. Acts as a substrate recognition component of an E3 ubiquitin-protein ligase complex: mechanistically, Vif hijacks a host cullin-5-RING E3 ubiquitin-protein ligase complex (ECS complex) and the transcription coactivator CBFB/CBF-beta to form an active E3 ubiquitin-protein ligase complex that targets APOBEC3G and APOBEC3F for polyubiquitination, leading to their degradation by the proteasome. Vif interaction with APOBEC3G also blocks its cytidine deaminase activity in a proteasome-independent manner, suggesting a dual inhibitory mechanism. May interact directly with APOBEC3G mRNA in order to inhibit its translation. Association with CBFB/CBF-beta also inhibits the transcription coactivator activity of CBFB/CBF-beta. Seems to play a role in viral morphology by affecting the stability of the viral nucleoprotein core. Finally, Vif also contributes to the G2 cell cycle arrest observed in HIV infected cells.</text>
</comment>
<comment type="subunit">
    <text evidence="1">Homomultimer; in vitro and presumably in vivo. Interacts with viral RNA and Pr55Gag precursor; these interactions mediate Vif incorporation into the virion. Interacts with the viral reverse transcriptase. Forms cullin-5-RING E3 ubiquitin-protein ligase complex (ECS complex) by interacting with host CUL5, RBX2, elongin BC complex (ELOB and ELOC) and CBFB/CBF-beta. Within the ECS complex, Vif interacts directly with host CUL5, ELOC and APOBEC (APOBEC3F and APOBEC3G) substrates. The ECS complex also contains some single-stranded RNA (ssRNA) that acts as a glue that bridges Vif with APOBEC (APOBEC3F and APOBEC3G) substrates. Interacts with host UBCE7IP1 isoform 3/ZIN and possibly with SAT. Interacts with host tyrosine kinases HCK and FYN; these interactions may decrease level of phosphorylated APOBEC3G incorporation into virions. Interacts with host ABCE1; this interaction may play a role in protecting viral RNA from damage during viral assembly. Interacts with host MDM2; this interaction targets Vif for degradation by the proteasome.</text>
</comment>
<comment type="subcellular location">
    <subcellularLocation>
        <location evidence="2">Host cytoplasm</location>
    </subcellularLocation>
    <subcellularLocation>
        <location evidence="2">Host cell membrane</location>
        <topology evidence="2">Peripheral membrane protein</topology>
        <orientation evidence="2">Cytoplasmic side</orientation>
    </subcellularLocation>
    <subcellularLocation>
        <location evidence="2">Virion</location>
    </subcellularLocation>
    <text evidence="2">In the cytoplasm, seems to colocalize with intermediate filament vimentin. A fraction is associated with the cytoplasmic side of cellular membranes, presumably via the interaction with Pr55Gag precursor. Incorporated in virions at a ratio of approximately 7 to 20 molecules per virion.</text>
</comment>
<comment type="induction">
    <text evidence="2">Expressed late during infection in a Rev-dependent manner.</text>
</comment>
<comment type="domain">
    <text evidence="2">The BC-like-box motif mediates the interaction with elongin BC complex.</text>
</comment>
<comment type="domain">
    <text evidence="2">The HCCH motif (H-x(5)-C-x(18)-C-x(5)-H) mediates the interaction with CUL5.</text>
</comment>
<comment type="PTM">
    <text evidence="2">Processed in virion by the viral protease.</text>
</comment>
<comment type="PTM">
    <text evidence="2">Highly phosphorylated on serine and threonine residues.</text>
</comment>
<comment type="PTM">
    <text evidence="2">Polyubiquitinated and degraded by the proteasome in the presence of APOBEC3G.</text>
</comment>
<comment type="miscellaneous">
    <text evidence="2">Vif-defective viruses show catastrophic failure in reverse transcription due to APOBEC-induced mutations that initiate a DNA base repair pathway and compromise the structural integrity of the ssDNA. In the absence of Vif, the virion is morphologically abnormal.</text>
</comment>
<comment type="miscellaneous">
    <text evidence="2">HIV-1 lineages are divided in three main groups, M (for Major), O (for Outlier), and N (for New, or Non-M, Non-O). The vast majority of strains found worldwide belong to the group M. Group O seems to be endemic to and largely confined to Cameroon and neighboring countries in West Central Africa, where these viruses represent a small minority of HIV-1 strains. The group N is represented by a limited number of isolates from Cameroonian persons. The group M is further subdivided in 9 clades or subtypes (A to D, F to H, J and K).</text>
</comment>
<comment type="miscellaneous">
    <text evidence="2">Required for replication in 'nonpermissive' cells, including primary T-cells, macrophages and certain T-cell lines, but is dispensable for replication in 'permissive' cell lines, such as 293T cells. In nonpermissive cells, Vif-defective viruses can produce virions, but they fail to complete reverse transcription and cannot successfully infect new cells.</text>
</comment>
<comment type="similarity">
    <text evidence="2">Belongs to the primate lentivirus group Vif protein family.</text>
</comment>